<reference key="1">
    <citation type="journal article" date="2003" name="Nature">
        <title>The genome sequence of Bacillus anthracis Ames and comparison to closely related bacteria.</title>
        <authorList>
            <person name="Read T.D."/>
            <person name="Peterson S.N."/>
            <person name="Tourasse N.J."/>
            <person name="Baillie L.W."/>
            <person name="Paulsen I.T."/>
            <person name="Nelson K.E."/>
            <person name="Tettelin H."/>
            <person name="Fouts D.E."/>
            <person name="Eisen J.A."/>
            <person name="Gill S.R."/>
            <person name="Holtzapple E.K."/>
            <person name="Okstad O.A."/>
            <person name="Helgason E."/>
            <person name="Rilstone J."/>
            <person name="Wu M."/>
            <person name="Kolonay J.F."/>
            <person name="Beanan M.J."/>
            <person name="Dodson R.J."/>
            <person name="Brinkac L.M."/>
            <person name="Gwinn M.L."/>
            <person name="DeBoy R.T."/>
            <person name="Madpu R."/>
            <person name="Daugherty S.C."/>
            <person name="Durkin A.S."/>
            <person name="Haft D.H."/>
            <person name="Nelson W.C."/>
            <person name="Peterson J.D."/>
            <person name="Pop M."/>
            <person name="Khouri H.M."/>
            <person name="Radune D."/>
            <person name="Benton J.L."/>
            <person name="Mahamoud Y."/>
            <person name="Jiang L."/>
            <person name="Hance I.R."/>
            <person name="Weidman J.F."/>
            <person name="Berry K.J."/>
            <person name="Plaut R.D."/>
            <person name="Wolf A.M."/>
            <person name="Watkins K.L."/>
            <person name="Nierman W.C."/>
            <person name="Hazen A."/>
            <person name="Cline R.T."/>
            <person name="Redmond C."/>
            <person name="Thwaite J.E."/>
            <person name="White O."/>
            <person name="Salzberg S.L."/>
            <person name="Thomason B."/>
            <person name="Friedlander A.M."/>
            <person name="Koehler T.M."/>
            <person name="Hanna P.C."/>
            <person name="Kolstoe A.-B."/>
            <person name="Fraser C.M."/>
        </authorList>
    </citation>
    <scope>NUCLEOTIDE SEQUENCE [LARGE SCALE GENOMIC DNA]</scope>
    <source>
        <strain>Ames / isolate Porton</strain>
    </source>
</reference>
<reference key="2">
    <citation type="journal article" date="2009" name="J. Bacteriol.">
        <title>The complete genome sequence of Bacillus anthracis Ames 'Ancestor'.</title>
        <authorList>
            <person name="Ravel J."/>
            <person name="Jiang L."/>
            <person name="Stanley S.T."/>
            <person name="Wilson M.R."/>
            <person name="Decker R.S."/>
            <person name="Read T.D."/>
            <person name="Worsham P."/>
            <person name="Keim P.S."/>
            <person name="Salzberg S.L."/>
            <person name="Fraser-Liggett C.M."/>
            <person name="Rasko D.A."/>
        </authorList>
    </citation>
    <scope>NUCLEOTIDE SEQUENCE [LARGE SCALE GENOMIC DNA]</scope>
    <source>
        <strain>Ames ancestor</strain>
    </source>
</reference>
<reference key="3">
    <citation type="submission" date="2004-01" db="EMBL/GenBank/DDBJ databases">
        <title>Complete genome sequence of Bacillus anthracis Sterne.</title>
        <authorList>
            <person name="Brettin T.S."/>
            <person name="Bruce D."/>
            <person name="Challacombe J.F."/>
            <person name="Gilna P."/>
            <person name="Han C."/>
            <person name="Hill K."/>
            <person name="Hitchcock P."/>
            <person name="Jackson P."/>
            <person name="Keim P."/>
            <person name="Longmire J."/>
            <person name="Lucas S."/>
            <person name="Okinaka R."/>
            <person name="Richardson P."/>
            <person name="Rubin E."/>
            <person name="Tice H."/>
        </authorList>
    </citation>
    <scope>NUCLEOTIDE SEQUENCE [LARGE SCALE GENOMIC DNA]</scope>
    <source>
        <strain>Sterne</strain>
    </source>
</reference>
<gene>
    <name evidence="1" type="primary">hisB</name>
    <name type="ordered locus">BA_1427</name>
    <name type="ordered locus">GBAA_1427</name>
    <name type="ordered locus">BAS1318</name>
</gene>
<protein>
    <recommendedName>
        <fullName evidence="1">Imidazoleglycerol-phosphate dehydratase</fullName>
        <shortName evidence="1">IGPD</shortName>
        <ecNumber evidence="1">4.2.1.19</ecNumber>
    </recommendedName>
</protein>
<feature type="chain" id="PRO_0000158102" description="Imidazoleglycerol-phosphate dehydratase">
    <location>
        <begin position="1"/>
        <end position="194"/>
    </location>
</feature>
<accession>Q81T61</accession>
<accession>Q6I1E4</accession>
<accession>Q6KV90</accession>
<dbReference type="EC" id="4.2.1.19" evidence="1"/>
<dbReference type="EMBL" id="AE016879">
    <property type="protein sequence ID" value="AAP25370.1"/>
    <property type="molecule type" value="Genomic_DNA"/>
</dbReference>
<dbReference type="EMBL" id="AE017334">
    <property type="protein sequence ID" value="AAT30523.1"/>
    <property type="molecule type" value="Genomic_DNA"/>
</dbReference>
<dbReference type="EMBL" id="AE017225">
    <property type="protein sequence ID" value="AAT53638.1"/>
    <property type="molecule type" value="Genomic_DNA"/>
</dbReference>
<dbReference type="RefSeq" id="NP_843884.1">
    <property type="nucleotide sequence ID" value="NC_003997.3"/>
</dbReference>
<dbReference type="RefSeq" id="WP_001209295.1">
    <property type="nucleotide sequence ID" value="NZ_WXXJ01000017.1"/>
</dbReference>
<dbReference type="RefSeq" id="YP_027587.1">
    <property type="nucleotide sequence ID" value="NC_005945.1"/>
</dbReference>
<dbReference type="SMR" id="Q81T61"/>
<dbReference type="STRING" id="261594.GBAA_1427"/>
<dbReference type="DNASU" id="1085909"/>
<dbReference type="GeneID" id="45021406"/>
<dbReference type="KEGG" id="ban:BA_1427"/>
<dbReference type="KEGG" id="banh:HYU01_07235"/>
<dbReference type="KEGG" id="bar:GBAA_1427"/>
<dbReference type="KEGG" id="bat:BAS1318"/>
<dbReference type="PATRIC" id="fig|198094.11.peg.1400"/>
<dbReference type="eggNOG" id="COG0131">
    <property type="taxonomic scope" value="Bacteria"/>
</dbReference>
<dbReference type="HOGENOM" id="CLU_044308_3_0_9"/>
<dbReference type="OMA" id="GIPFFDH"/>
<dbReference type="OrthoDB" id="9790411at2"/>
<dbReference type="UniPathway" id="UPA00031">
    <property type="reaction ID" value="UER00011"/>
</dbReference>
<dbReference type="Proteomes" id="UP000000427">
    <property type="component" value="Chromosome"/>
</dbReference>
<dbReference type="Proteomes" id="UP000000594">
    <property type="component" value="Chromosome"/>
</dbReference>
<dbReference type="GO" id="GO:0005737">
    <property type="term" value="C:cytoplasm"/>
    <property type="evidence" value="ECO:0007669"/>
    <property type="project" value="UniProtKB-SubCell"/>
</dbReference>
<dbReference type="GO" id="GO:0004424">
    <property type="term" value="F:imidazoleglycerol-phosphate dehydratase activity"/>
    <property type="evidence" value="ECO:0007669"/>
    <property type="project" value="UniProtKB-UniRule"/>
</dbReference>
<dbReference type="GO" id="GO:0000105">
    <property type="term" value="P:L-histidine biosynthetic process"/>
    <property type="evidence" value="ECO:0007669"/>
    <property type="project" value="UniProtKB-UniRule"/>
</dbReference>
<dbReference type="CDD" id="cd07914">
    <property type="entry name" value="IGPD"/>
    <property type="match status" value="1"/>
</dbReference>
<dbReference type="FunFam" id="3.30.230.40:FF:000001">
    <property type="entry name" value="Imidazoleglycerol-phosphate dehydratase HisB"/>
    <property type="match status" value="1"/>
</dbReference>
<dbReference type="FunFam" id="3.30.230.40:FF:000003">
    <property type="entry name" value="Imidazoleglycerol-phosphate dehydratase HisB"/>
    <property type="match status" value="1"/>
</dbReference>
<dbReference type="Gene3D" id="3.30.230.40">
    <property type="entry name" value="Imidazole glycerol phosphate dehydratase, domain 1"/>
    <property type="match status" value="2"/>
</dbReference>
<dbReference type="HAMAP" id="MF_00076">
    <property type="entry name" value="HisB"/>
    <property type="match status" value="1"/>
</dbReference>
<dbReference type="InterPro" id="IPR038494">
    <property type="entry name" value="IGPD_sf"/>
</dbReference>
<dbReference type="InterPro" id="IPR000807">
    <property type="entry name" value="ImidazoleglycerolP_deHydtase"/>
</dbReference>
<dbReference type="InterPro" id="IPR020565">
    <property type="entry name" value="ImidazoleglycerP_deHydtase_CS"/>
</dbReference>
<dbReference type="InterPro" id="IPR020568">
    <property type="entry name" value="Ribosomal_Su5_D2-typ_SF"/>
</dbReference>
<dbReference type="NCBIfam" id="NF002107">
    <property type="entry name" value="PRK00951.1-2"/>
    <property type="match status" value="1"/>
</dbReference>
<dbReference type="NCBIfam" id="NF002111">
    <property type="entry name" value="PRK00951.2-1"/>
    <property type="match status" value="1"/>
</dbReference>
<dbReference type="NCBIfam" id="NF002114">
    <property type="entry name" value="PRK00951.2-4"/>
    <property type="match status" value="1"/>
</dbReference>
<dbReference type="PANTHER" id="PTHR23133:SF2">
    <property type="entry name" value="IMIDAZOLEGLYCEROL-PHOSPHATE DEHYDRATASE"/>
    <property type="match status" value="1"/>
</dbReference>
<dbReference type="PANTHER" id="PTHR23133">
    <property type="entry name" value="IMIDAZOLEGLYCEROL-PHOSPHATE DEHYDRATASE HIS7"/>
    <property type="match status" value="1"/>
</dbReference>
<dbReference type="Pfam" id="PF00475">
    <property type="entry name" value="IGPD"/>
    <property type="match status" value="1"/>
</dbReference>
<dbReference type="SUPFAM" id="SSF54211">
    <property type="entry name" value="Ribosomal protein S5 domain 2-like"/>
    <property type="match status" value="2"/>
</dbReference>
<dbReference type="PROSITE" id="PS00954">
    <property type="entry name" value="IGP_DEHYDRATASE_1"/>
    <property type="match status" value="1"/>
</dbReference>
<dbReference type="PROSITE" id="PS00955">
    <property type="entry name" value="IGP_DEHYDRATASE_2"/>
    <property type="match status" value="1"/>
</dbReference>
<name>HIS7_BACAN</name>
<sequence length="194" mass="21509">MRESSQIRETTETKIKLSLQLDEGKNVSVQTGVGFFDHMLTLFARHGRFGLQVEAEGDVFVDAHHTVEDVGIVLGNCLKEALQNKEGINRYGSAYVPMDESLGFVAIDISGRSYIVFQGELTNPKLGDFDTELTEEFFRAVAHAANITLHARILYGSNTHHKIEALFKAFGRALREAVERNAHITGVNSTKGML</sequence>
<proteinExistence type="inferred from homology"/>
<evidence type="ECO:0000255" key="1">
    <source>
        <dbReference type="HAMAP-Rule" id="MF_00076"/>
    </source>
</evidence>
<keyword id="KW-0028">Amino-acid biosynthesis</keyword>
<keyword id="KW-0963">Cytoplasm</keyword>
<keyword id="KW-0368">Histidine biosynthesis</keyword>
<keyword id="KW-0456">Lyase</keyword>
<keyword id="KW-1185">Reference proteome</keyword>
<organism>
    <name type="scientific">Bacillus anthracis</name>
    <dbReference type="NCBI Taxonomy" id="1392"/>
    <lineage>
        <taxon>Bacteria</taxon>
        <taxon>Bacillati</taxon>
        <taxon>Bacillota</taxon>
        <taxon>Bacilli</taxon>
        <taxon>Bacillales</taxon>
        <taxon>Bacillaceae</taxon>
        <taxon>Bacillus</taxon>
        <taxon>Bacillus cereus group</taxon>
    </lineage>
</organism>
<comment type="catalytic activity">
    <reaction evidence="1">
        <text>D-erythro-1-(imidazol-4-yl)glycerol 3-phosphate = 3-(imidazol-4-yl)-2-oxopropyl phosphate + H2O</text>
        <dbReference type="Rhea" id="RHEA:11040"/>
        <dbReference type="ChEBI" id="CHEBI:15377"/>
        <dbReference type="ChEBI" id="CHEBI:57766"/>
        <dbReference type="ChEBI" id="CHEBI:58278"/>
        <dbReference type="EC" id="4.2.1.19"/>
    </reaction>
</comment>
<comment type="pathway">
    <text evidence="1">Amino-acid biosynthesis; L-histidine biosynthesis; L-histidine from 5-phospho-alpha-D-ribose 1-diphosphate: step 6/9.</text>
</comment>
<comment type="subcellular location">
    <subcellularLocation>
        <location evidence="1">Cytoplasm</location>
    </subcellularLocation>
</comment>
<comment type="similarity">
    <text evidence="1">Belongs to the imidazoleglycerol-phosphate dehydratase family.</text>
</comment>